<accession>Q2NK66</accession>
<comment type="function">
    <text evidence="1">Participates actively in the response to hyperosmotic and heat shock by preventing the aggregation of stress-denatured proteins, in association with DnaK and GrpE. It is the nucleotide exchange factor for DnaK and may function as a thermosensor. Unfolded proteins bind initially to DnaJ; upon interaction with the DnaJ-bound protein, DnaK hydrolyzes its bound ATP, resulting in the formation of a stable complex. GrpE releases ADP from DnaK; ATP binding to DnaK triggers the release of the substrate protein, thus completing the reaction cycle. Several rounds of ATP-dependent interactions between DnaJ, DnaK and GrpE are required for fully efficient folding.</text>
</comment>
<comment type="subunit">
    <text evidence="1">Homodimer.</text>
</comment>
<comment type="subcellular location">
    <subcellularLocation>
        <location evidence="1">Cytoplasm</location>
    </subcellularLocation>
</comment>
<comment type="similarity">
    <text evidence="1">Belongs to the GrpE family.</text>
</comment>
<proteinExistence type="inferred from homology"/>
<reference key="1">
    <citation type="journal article" date="2006" name="J. Bacteriol.">
        <title>Living with genome instability: the adaptation of phytoplasmas to diverse environments of their insect and plant hosts.</title>
        <authorList>
            <person name="Bai X."/>
            <person name="Zhang J."/>
            <person name="Ewing A."/>
            <person name="Miller S.A."/>
            <person name="Jancso Radek A."/>
            <person name="Shevchenko D.V."/>
            <person name="Tsukerman K."/>
            <person name="Walunas T."/>
            <person name="Lapidus A."/>
            <person name="Campbell J.W."/>
            <person name="Hogenhout S.A."/>
        </authorList>
    </citation>
    <scope>NUCLEOTIDE SEQUENCE [LARGE SCALE GENOMIC DNA]</scope>
    <source>
        <strain>AYWB</strain>
    </source>
</reference>
<keyword id="KW-0143">Chaperone</keyword>
<keyword id="KW-0963">Cytoplasm</keyword>
<keyword id="KW-0346">Stress response</keyword>
<feature type="chain" id="PRO_1000053537" description="Protein GrpE">
    <location>
        <begin position="1"/>
        <end position="241"/>
    </location>
</feature>
<feature type="region of interest" description="Disordered" evidence="2">
    <location>
        <begin position="28"/>
        <end position="78"/>
    </location>
</feature>
<feature type="compositionally biased region" description="Basic and acidic residues" evidence="2">
    <location>
        <begin position="28"/>
        <end position="49"/>
    </location>
</feature>
<feature type="compositionally biased region" description="Low complexity" evidence="2">
    <location>
        <begin position="50"/>
        <end position="62"/>
    </location>
</feature>
<name>GRPE_AYWBP</name>
<evidence type="ECO:0000255" key="1">
    <source>
        <dbReference type="HAMAP-Rule" id="MF_01151"/>
    </source>
</evidence>
<evidence type="ECO:0000256" key="2">
    <source>
        <dbReference type="SAM" id="MobiDB-lite"/>
    </source>
</evidence>
<sequence length="241" mass="28573">MFLEKEQDNLDNLKTQTKELHKDYTECQNCQKEETQTTNKDNQKEDETFKNQPNKTKQTNTKQQKHLSKESSHQQITKLQTQIKELQQKLSQQKKTFDEGLLKNQAEFINFKKRAQTQKENELKYASSNFINNLLMPLEQLEKVIDMPTQNELLQKYLLGFKLLQKQIKKVLQDEGVEEIEALNKPFDPTFHHALETVCDFEKPDKTNLAVLQKGYLYKKRILRPTLVKVNEWSDKNEKNE</sequence>
<protein>
    <recommendedName>
        <fullName evidence="1">Protein GrpE</fullName>
    </recommendedName>
    <alternativeName>
        <fullName evidence="1">HSP-70 cofactor</fullName>
    </alternativeName>
</protein>
<gene>
    <name evidence="1" type="primary">grpE</name>
    <name type="ordered locus">AYWB_060</name>
</gene>
<dbReference type="EMBL" id="CP000061">
    <property type="protein sequence ID" value="ABC65177.1"/>
    <property type="molecule type" value="Genomic_DNA"/>
</dbReference>
<dbReference type="RefSeq" id="WP_011412344.1">
    <property type="nucleotide sequence ID" value="NC_007716.1"/>
</dbReference>
<dbReference type="SMR" id="Q2NK66"/>
<dbReference type="STRING" id="322098.AYWB_060"/>
<dbReference type="KEGG" id="ayw:AYWB_060"/>
<dbReference type="eggNOG" id="COG0576">
    <property type="taxonomic scope" value="Bacteria"/>
</dbReference>
<dbReference type="HOGENOM" id="CLU_057217_5_2_14"/>
<dbReference type="OrthoDB" id="9812586at2"/>
<dbReference type="PhylomeDB" id="Q2NK66"/>
<dbReference type="Proteomes" id="UP000001934">
    <property type="component" value="Chromosome"/>
</dbReference>
<dbReference type="GO" id="GO:0005737">
    <property type="term" value="C:cytoplasm"/>
    <property type="evidence" value="ECO:0007669"/>
    <property type="project" value="UniProtKB-SubCell"/>
</dbReference>
<dbReference type="GO" id="GO:0000774">
    <property type="term" value="F:adenyl-nucleotide exchange factor activity"/>
    <property type="evidence" value="ECO:0007669"/>
    <property type="project" value="InterPro"/>
</dbReference>
<dbReference type="GO" id="GO:0042803">
    <property type="term" value="F:protein homodimerization activity"/>
    <property type="evidence" value="ECO:0007669"/>
    <property type="project" value="InterPro"/>
</dbReference>
<dbReference type="GO" id="GO:0051087">
    <property type="term" value="F:protein-folding chaperone binding"/>
    <property type="evidence" value="ECO:0007669"/>
    <property type="project" value="InterPro"/>
</dbReference>
<dbReference type="GO" id="GO:0051082">
    <property type="term" value="F:unfolded protein binding"/>
    <property type="evidence" value="ECO:0007669"/>
    <property type="project" value="TreeGrafter"/>
</dbReference>
<dbReference type="GO" id="GO:0006457">
    <property type="term" value="P:protein folding"/>
    <property type="evidence" value="ECO:0007669"/>
    <property type="project" value="InterPro"/>
</dbReference>
<dbReference type="CDD" id="cd00446">
    <property type="entry name" value="GrpE"/>
    <property type="match status" value="1"/>
</dbReference>
<dbReference type="Gene3D" id="3.90.20.20">
    <property type="match status" value="1"/>
</dbReference>
<dbReference type="Gene3D" id="2.30.22.10">
    <property type="entry name" value="Head domain of nucleotide exchange factor GrpE"/>
    <property type="match status" value="1"/>
</dbReference>
<dbReference type="HAMAP" id="MF_01151">
    <property type="entry name" value="GrpE"/>
    <property type="match status" value="1"/>
</dbReference>
<dbReference type="InterPro" id="IPR000740">
    <property type="entry name" value="GrpE"/>
</dbReference>
<dbReference type="InterPro" id="IPR013805">
    <property type="entry name" value="GrpE_coiled_coil"/>
</dbReference>
<dbReference type="InterPro" id="IPR009012">
    <property type="entry name" value="GrpE_head"/>
</dbReference>
<dbReference type="PANTHER" id="PTHR21237">
    <property type="entry name" value="GRPE PROTEIN"/>
    <property type="match status" value="1"/>
</dbReference>
<dbReference type="PANTHER" id="PTHR21237:SF23">
    <property type="entry name" value="GRPE PROTEIN HOMOLOG, MITOCHONDRIAL"/>
    <property type="match status" value="1"/>
</dbReference>
<dbReference type="Pfam" id="PF01025">
    <property type="entry name" value="GrpE"/>
    <property type="match status" value="1"/>
</dbReference>
<dbReference type="PRINTS" id="PR00773">
    <property type="entry name" value="GRPEPROTEIN"/>
</dbReference>
<dbReference type="SUPFAM" id="SSF58014">
    <property type="entry name" value="Coiled-coil domain of nucleotide exchange factor GrpE"/>
    <property type="match status" value="1"/>
</dbReference>
<dbReference type="SUPFAM" id="SSF51064">
    <property type="entry name" value="Head domain of nucleotide exchange factor GrpE"/>
    <property type="match status" value="1"/>
</dbReference>
<dbReference type="PROSITE" id="PS01071">
    <property type="entry name" value="GRPE"/>
    <property type="match status" value="1"/>
</dbReference>
<organism>
    <name type="scientific">Aster yellows witches'-broom phytoplasma (strain AYWB)</name>
    <dbReference type="NCBI Taxonomy" id="322098"/>
    <lineage>
        <taxon>Bacteria</taxon>
        <taxon>Bacillati</taxon>
        <taxon>Mycoplasmatota</taxon>
        <taxon>Mollicutes</taxon>
        <taxon>Acholeplasmatales</taxon>
        <taxon>Acholeplasmataceae</taxon>
        <taxon>Candidatus Phytoplasma</taxon>
        <taxon>16SrI (Aster yellows group)</taxon>
    </lineage>
</organism>